<accession>Q7U6S0</accession>
<organism>
    <name type="scientific">Parasynechococcus marenigrum (strain WH8102)</name>
    <dbReference type="NCBI Taxonomy" id="84588"/>
    <lineage>
        <taxon>Bacteria</taxon>
        <taxon>Bacillati</taxon>
        <taxon>Cyanobacteriota</taxon>
        <taxon>Cyanophyceae</taxon>
        <taxon>Synechococcales</taxon>
        <taxon>Prochlorococcaceae</taxon>
        <taxon>Parasynechococcus</taxon>
        <taxon>Parasynechococcus marenigrum</taxon>
    </lineage>
</organism>
<reference key="1">
    <citation type="journal article" date="2003" name="Nature">
        <title>The genome of a motile marine Synechococcus.</title>
        <authorList>
            <person name="Palenik B."/>
            <person name="Brahamsha B."/>
            <person name="Larimer F.W."/>
            <person name="Land M.L."/>
            <person name="Hauser L."/>
            <person name="Chain P."/>
            <person name="Lamerdin J.E."/>
            <person name="Regala W."/>
            <person name="Allen E.E."/>
            <person name="McCarren J."/>
            <person name="Paulsen I.T."/>
            <person name="Dufresne A."/>
            <person name="Partensky F."/>
            <person name="Webb E.A."/>
            <person name="Waterbury J."/>
        </authorList>
    </citation>
    <scope>NUCLEOTIDE SEQUENCE [LARGE SCALE GENOMIC DNA]</scope>
    <source>
        <strain>WH8102</strain>
    </source>
</reference>
<sequence>MTRFQSDAAVSADRGHLMTEQPNPRSTALDLLDTAELVTLFVEEDRRPQQAVADASASISAAVDRIASRLKDGGRLFYLGAGTSGRLGVLDAAECPPTFCSDPEMVQGVLAGGAPALLRSSEGLEDLEAAGREDLDQRGFNAGDCLVGIAAGGTTPYVRGGLSHARSIGALAIAMACVPSDQAPLPCDIDIRLLTGPELLTGSTRLKAGTATKMALNIISTAVMVRLGKVFGNRMVDVSASNSKLVDRCLRILRDLGGIERDDGLVLLDQAGGSVKLALLMASSGLASSEAMELLQTHDGQLRQAFASRGLKLAQS</sequence>
<proteinExistence type="inferred from homology"/>
<name>MURQ_PARMW</name>
<protein>
    <recommendedName>
        <fullName evidence="1">N-acetylmuramic acid 6-phosphate etherase</fullName>
        <shortName evidence="1">MurNAc-6-P etherase</shortName>
        <ecNumber evidence="1">4.2.1.126</ecNumber>
    </recommendedName>
    <alternativeName>
        <fullName evidence="1">N-acetylmuramic acid 6-phosphate hydrolase</fullName>
    </alternativeName>
    <alternativeName>
        <fullName evidence="1">N-acetylmuramic acid 6-phosphate lyase</fullName>
    </alternativeName>
</protein>
<evidence type="ECO:0000255" key="1">
    <source>
        <dbReference type="HAMAP-Rule" id="MF_00068"/>
    </source>
</evidence>
<evidence type="ECO:0000256" key="2">
    <source>
        <dbReference type="SAM" id="MobiDB-lite"/>
    </source>
</evidence>
<comment type="function">
    <text evidence="1">Specifically catalyzes the cleavage of the D-lactyl ether substituent of MurNAc 6-phosphate, producing GlcNAc 6-phosphate and D-lactate.</text>
</comment>
<comment type="catalytic activity">
    <reaction evidence="1">
        <text>N-acetyl-D-muramate 6-phosphate + H2O = N-acetyl-D-glucosamine 6-phosphate + (R)-lactate</text>
        <dbReference type="Rhea" id="RHEA:26410"/>
        <dbReference type="ChEBI" id="CHEBI:15377"/>
        <dbReference type="ChEBI" id="CHEBI:16004"/>
        <dbReference type="ChEBI" id="CHEBI:57513"/>
        <dbReference type="ChEBI" id="CHEBI:58722"/>
        <dbReference type="EC" id="4.2.1.126"/>
    </reaction>
</comment>
<comment type="pathway">
    <text evidence="1">Amino-sugar metabolism; N-acetylmuramate degradation.</text>
</comment>
<comment type="subunit">
    <text evidence="1">Homodimer.</text>
</comment>
<comment type="miscellaneous">
    <text evidence="1">A lyase-type mechanism (elimination/hydration) is suggested for the cleavage of the lactyl ether bond of MurNAc 6-phosphate, with the formation of an alpha,beta-unsaturated aldehyde intermediate with (E)-stereochemistry, followed by the syn addition of water to give product.</text>
</comment>
<comment type="similarity">
    <text evidence="1">Belongs to the GCKR-like family. MurNAc-6-P etherase subfamily.</text>
</comment>
<gene>
    <name evidence="1" type="primary">murQ</name>
    <name type="ordered locus">SYNW1266</name>
</gene>
<feature type="chain" id="PRO_0000249674" description="N-acetylmuramic acid 6-phosphate etherase">
    <location>
        <begin position="1"/>
        <end position="316"/>
    </location>
</feature>
<feature type="domain" description="SIS" evidence="1">
    <location>
        <begin position="66"/>
        <end position="229"/>
    </location>
</feature>
<feature type="region of interest" description="Disordered" evidence="2">
    <location>
        <begin position="1"/>
        <end position="24"/>
    </location>
</feature>
<feature type="active site" description="Proton donor" evidence="1">
    <location>
        <position position="94"/>
    </location>
</feature>
<feature type="active site" evidence="1">
    <location>
        <position position="125"/>
    </location>
</feature>
<keyword id="KW-0119">Carbohydrate metabolism</keyword>
<keyword id="KW-0456">Lyase</keyword>
<dbReference type="EC" id="4.2.1.126" evidence="1"/>
<dbReference type="EMBL" id="BX569692">
    <property type="protein sequence ID" value="CAE07781.1"/>
    <property type="molecule type" value="Genomic_DNA"/>
</dbReference>
<dbReference type="RefSeq" id="WP_011128130.1">
    <property type="nucleotide sequence ID" value="NC_005070.1"/>
</dbReference>
<dbReference type="SMR" id="Q7U6S0"/>
<dbReference type="STRING" id="84588.SYNW1266"/>
<dbReference type="KEGG" id="syw:SYNW1266"/>
<dbReference type="eggNOG" id="COG2103">
    <property type="taxonomic scope" value="Bacteria"/>
</dbReference>
<dbReference type="HOGENOM" id="CLU_049049_1_1_3"/>
<dbReference type="UniPathway" id="UPA00342"/>
<dbReference type="Proteomes" id="UP000001422">
    <property type="component" value="Chromosome"/>
</dbReference>
<dbReference type="GO" id="GO:0097367">
    <property type="term" value="F:carbohydrate derivative binding"/>
    <property type="evidence" value="ECO:0007669"/>
    <property type="project" value="InterPro"/>
</dbReference>
<dbReference type="GO" id="GO:0016835">
    <property type="term" value="F:carbon-oxygen lyase activity"/>
    <property type="evidence" value="ECO:0007669"/>
    <property type="project" value="UniProtKB-UniRule"/>
</dbReference>
<dbReference type="GO" id="GO:0016803">
    <property type="term" value="F:ether hydrolase activity"/>
    <property type="evidence" value="ECO:0007669"/>
    <property type="project" value="TreeGrafter"/>
</dbReference>
<dbReference type="GO" id="GO:0046348">
    <property type="term" value="P:amino sugar catabolic process"/>
    <property type="evidence" value="ECO:0007669"/>
    <property type="project" value="InterPro"/>
</dbReference>
<dbReference type="GO" id="GO:0097173">
    <property type="term" value="P:N-acetylmuramic acid catabolic process"/>
    <property type="evidence" value="ECO:0007669"/>
    <property type="project" value="UniProtKB-UniPathway"/>
</dbReference>
<dbReference type="GO" id="GO:0009254">
    <property type="term" value="P:peptidoglycan turnover"/>
    <property type="evidence" value="ECO:0007669"/>
    <property type="project" value="TreeGrafter"/>
</dbReference>
<dbReference type="CDD" id="cd05007">
    <property type="entry name" value="SIS_Etherase"/>
    <property type="match status" value="1"/>
</dbReference>
<dbReference type="FunFam" id="3.40.50.10490:FF:000014">
    <property type="entry name" value="N-acetylmuramic acid 6-phosphate etherase"/>
    <property type="match status" value="1"/>
</dbReference>
<dbReference type="Gene3D" id="1.10.8.1080">
    <property type="match status" value="1"/>
</dbReference>
<dbReference type="Gene3D" id="3.40.50.10490">
    <property type="entry name" value="Glucose-6-phosphate isomerase like protein, domain 1"/>
    <property type="match status" value="1"/>
</dbReference>
<dbReference type="HAMAP" id="MF_00068">
    <property type="entry name" value="MurQ"/>
    <property type="match status" value="1"/>
</dbReference>
<dbReference type="InterPro" id="IPR005488">
    <property type="entry name" value="Etherase_MurQ"/>
</dbReference>
<dbReference type="InterPro" id="IPR005486">
    <property type="entry name" value="Glucokinase_regulatory_CS"/>
</dbReference>
<dbReference type="InterPro" id="IPR040190">
    <property type="entry name" value="MURQ/GCKR"/>
</dbReference>
<dbReference type="InterPro" id="IPR001347">
    <property type="entry name" value="SIS_dom"/>
</dbReference>
<dbReference type="InterPro" id="IPR046348">
    <property type="entry name" value="SIS_dom_sf"/>
</dbReference>
<dbReference type="NCBIfam" id="TIGR00274">
    <property type="entry name" value="N-acetylmuramic acid 6-phosphate etherase"/>
    <property type="match status" value="1"/>
</dbReference>
<dbReference type="NCBIfam" id="NF003915">
    <property type="entry name" value="PRK05441.1"/>
    <property type="match status" value="1"/>
</dbReference>
<dbReference type="NCBIfam" id="NF009222">
    <property type="entry name" value="PRK12570.1"/>
    <property type="match status" value="1"/>
</dbReference>
<dbReference type="PANTHER" id="PTHR10088">
    <property type="entry name" value="GLUCOKINASE REGULATORY PROTEIN"/>
    <property type="match status" value="1"/>
</dbReference>
<dbReference type="PANTHER" id="PTHR10088:SF4">
    <property type="entry name" value="GLUCOKINASE REGULATORY PROTEIN"/>
    <property type="match status" value="1"/>
</dbReference>
<dbReference type="Pfam" id="PF22645">
    <property type="entry name" value="GKRP_SIS_N"/>
    <property type="match status" value="1"/>
</dbReference>
<dbReference type="SUPFAM" id="SSF53697">
    <property type="entry name" value="SIS domain"/>
    <property type="match status" value="1"/>
</dbReference>
<dbReference type="PROSITE" id="PS01272">
    <property type="entry name" value="GCKR"/>
    <property type="match status" value="1"/>
</dbReference>
<dbReference type="PROSITE" id="PS51464">
    <property type="entry name" value="SIS"/>
    <property type="match status" value="1"/>
</dbReference>